<dbReference type="PIR" id="S04951">
    <property type="entry name" value="HASL2W"/>
</dbReference>
<dbReference type="PIR" id="S10481">
    <property type="entry name" value="HASL1W"/>
</dbReference>
<dbReference type="SMR" id="P15163"/>
<dbReference type="STRING" id="9713.P15163"/>
<dbReference type="Proteomes" id="UP000245341">
    <property type="component" value="Unplaced"/>
</dbReference>
<dbReference type="GO" id="GO:0072562">
    <property type="term" value="C:blood microparticle"/>
    <property type="evidence" value="ECO:0007669"/>
    <property type="project" value="TreeGrafter"/>
</dbReference>
<dbReference type="GO" id="GO:0031838">
    <property type="term" value="C:haptoglobin-hemoglobin complex"/>
    <property type="evidence" value="ECO:0007669"/>
    <property type="project" value="TreeGrafter"/>
</dbReference>
<dbReference type="GO" id="GO:0005833">
    <property type="term" value="C:hemoglobin complex"/>
    <property type="evidence" value="ECO:0007669"/>
    <property type="project" value="InterPro"/>
</dbReference>
<dbReference type="GO" id="GO:0031720">
    <property type="term" value="F:haptoglobin binding"/>
    <property type="evidence" value="ECO:0007669"/>
    <property type="project" value="TreeGrafter"/>
</dbReference>
<dbReference type="GO" id="GO:0020037">
    <property type="term" value="F:heme binding"/>
    <property type="evidence" value="ECO:0007669"/>
    <property type="project" value="InterPro"/>
</dbReference>
<dbReference type="GO" id="GO:0005506">
    <property type="term" value="F:iron ion binding"/>
    <property type="evidence" value="ECO:0007669"/>
    <property type="project" value="InterPro"/>
</dbReference>
<dbReference type="GO" id="GO:0043177">
    <property type="term" value="F:organic acid binding"/>
    <property type="evidence" value="ECO:0007669"/>
    <property type="project" value="TreeGrafter"/>
</dbReference>
<dbReference type="GO" id="GO:0019825">
    <property type="term" value="F:oxygen binding"/>
    <property type="evidence" value="ECO:0007669"/>
    <property type="project" value="InterPro"/>
</dbReference>
<dbReference type="GO" id="GO:0005344">
    <property type="term" value="F:oxygen carrier activity"/>
    <property type="evidence" value="ECO:0007669"/>
    <property type="project" value="UniProtKB-KW"/>
</dbReference>
<dbReference type="GO" id="GO:0004601">
    <property type="term" value="F:peroxidase activity"/>
    <property type="evidence" value="ECO:0007669"/>
    <property type="project" value="TreeGrafter"/>
</dbReference>
<dbReference type="GO" id="GO:0042744">
    <property type="term" value="P:hydrogen peroxide catabolic process"/>
    <property type="evidence" value="ECO:0007669"/>
    <property type="project" value="TreeGrafter"/>
</dbReference>
<dbReference type="CDD" id="cd08927">
    <property type="entry name" value="Hb-alpha-like"/>
    <property type="match status" value="1"/>
</dbReference>
<dbReference type="FunFam" id="1.10.490.10:FF:000002">
    <property type="entry name" value="Hemoglobin subunit alpha"/>
    <property type="match status" value="1"/>
</dbReference>
<dbReference type="Gene3D" id="1.10.490.10">
    <property type="entry name" value="Globins"/>
    <property type="match status" value="1"/>
</dbReference>
<dbReference type="InterPro" id="IPR000971">
    <property type="entry name" value="Globin"/>
</dbReference>
<dbReference type="InterPro" id="IPR009050">
    <property type="entry name" value="Globin-like_sf"/>
</dbReference>
<dbReference type="InterPro" id="IPR012292">
    <property type="entry name" value="Globin/Proto"/>
</dbReference>
<dbReference type="InterPro" id="IPR002338">
    <property type="entry name" value="Hemoglobin_a-typ"/>
</dbReference>
<dbReference type="InterPro" id="IPR050056">
    <property type="entry name" value="Hemoglobin_oxygen_transport"/>
</dbReference>
<dbReference type="InterPro" id="IPR002339">
    <property type="entry name" value="Hemoglobin_pi"/>
</dbReference>
<dbReference type="PANTHER" id="PTHR11442">
    <property type="entry name" value="HEMOGLOBIN FAMILY MEMBER"/>
    <property type="match status" value="1"/>
</dbReference>
<dbReference type="PANTHER" id="PTHR11442:SF48">
    <property type="entry name" value="HEMOGLOBIN SUBUNIT ALPHA"/>
    <property type="match status" value="1"/>
</dbReference>
<dbReference type="Pfam" id="PF00042">
    <property type="entry name" value="Globin"/>
    <property type="match status" value="1"/>
</dbReference>
<dbReference type="PRINTS" id="PR00612">
    <property type="entry name" value="ALPHAHAEM"/>
</dbReference>
<dbReference type="PRINTS" id="PR00815">
    <property type="entry name" value="PIHAEM"/>
</dbReference>
<dbReference type="SUPFAM" id="SSF46458">
    <property type="entry name" value="Globin-like"/>
    <property type="match status" value="1"/>
</dbReference>
<dbReference type="PROSITE" id="PS01033">
    <property type="entry name" value="GLOBIN"/>
    <property type="match status" value="1"/>
</dbReference>
<reference key="1">
    <citation type="journal article" date="1989" name="Biol. Chem. Hoppe-Seyler">
        <title>Carnivora: the primary structure of Weddell Seal (Leptonychotes weddelli, Pinnipedia) hemoglobin.</title>
        <authorList>
            <person name="Lin H.-X."/>
            <person name="Kleinschmidt T."/>
            <person name="Braunitzer G."/>
        </authorList>
    </citation>
    <scope>PROTEIN SEQUENCE</scope>
</reference>
<organism>
    <name type="scientific">Leptonychotes weddellii</name>
    <name type="common">Weddell seal</name>
    <name type="synonym">Otaria weddellii</name>
    <dbReference type="NCBI Taxonomy" id="9713"/>
    <lineage>
        <taxon>Eukaryota</taxon>
        <taxon>Metazoa</taxon>
        <taxon>Chordata</taxon>
        <taxon>Craniata</taxon>
        <taxon>Vertebrata</taxon>
        <taxon>Euteleostomi</taxon>
        <taxon>Mammalia</taxon>
        <taxon>Eutheria</taxon>
        <taxon>Laurasiatheria</taxon>
        <taxon>Carnivora</taxon>
        <taxon>Caniformia</taxon>
        <taxon>Pinnipedia</taxon>
        <taxon>Phocidae</taxon>
        <taxon>Monachinae</taxon>
        <taxon>Lobodontini</taxon>
        <taxon>Leptonychotes</taxon>
    </lineage>
</organism>
<name>HBA_LEPWE</name>
<accession>P15163</accession>
<evidence type="ECO:0000250" key="1">
    <source>
        <dbReference type="UniProtKB" id="P01942"/>
    </source>
</evidence>
<evidence type="ECO:0000250" key="2">
    <source>
        <dbReference type="UniProtKB" id="P69905"/>
    </source>
</evidence>
<evidence type="ECO:0000255" key="3">
    <source>
        <dbReference type="PROSITE-ProRule" id="PRU00238"/>
    </source>
</evidence>
<evidence type="ECO:0000305" key="4">
    <source>
    </source>
</evidence>
<feature type="chain" id="PRO_0000052668" description="Hemoglobin subunit alpha-1/2">
    <location>
        <begin position="1"/>
        <end position="141"/>
    </location>
</feature>
<feature type="domain" description="Globin" evidence="3">
    <location>
        <begin position="1"/>
        <end position="141"/>
    </location>
</feature>
<feature type="binding site" evidence="3">
    <location>
        <position position="58"/>
    </location>
    <ligand>
        <name>O2</name>
        <dbReference type="ChEBI" id="CHEBI:15379"/>
    </ligand>
</feature>
<feature type="binding site" description="proximal binding residue" evidence="3">
    <location>
        <position position="87"/>
    </location>
    <ligand>
        <name>heme b</name>
        <dbReference type="ChEBI" id="CHEBI:60344"/>
    </ligand>
    <ligandPart>
        <name>Fe</name>
        <dbReference type="ChEBI" id="CHEBI:18248"/>
    </ligandPart>
</feature>
<feature type="modified residue" description="Phosphoserine" evidence="2">
    <location>
        <position position="3"/>
    </location>
</feature>
<feature type="modified residue" description="N6-succinyllysine" evidence="1">
    <location>
        <position position="7"/>
    </location>
</feature>
<feature type="modified residue" description="Phosphothreonine" evidence="2">
    <location>
        <position position="8"/>
    </location>
</feature>
<feature type="modified residue" description="N6-succinyllysine" evidence="1">
    <location>
        <position position="11"/>
    </location>
</feature>
<feature type="modified residue" description="N6-acetyllysine; alternate" evidence="2">
    <location>
        <position position="16"/>
    </location>
</feature>
<feature type="modified residue" description="N6-succinyllysine; alternate" evidence="1">
    <location>
        <position position="16"/>
    </location>
</feature>
<feature type="modified residue" description="Phosphotyrosine" evidence="2">
    <location>
        <position position="24"/>
    </location>
</feature>
<feature type="modified residue" description="N6-succinyllysine" evidence="1">
    <location>
        <position position="40"/>
    </location>
</feature>
<feature type="modified residue" description="Phosphoserine" evidence="2">
    <location>
        <position position="49"/>
    </location>
</feature>
<feature type="modified residue" description="Phosphoserine" evidence="1">
    <location>
        <position position="102"/>
    </location>
</feature>
<feature type="modified residue" description="Phosphothreonine" evidence="1">
    <location>
        <position position="108"/>
    </location>
</feature>
<feature type="modified residue" description="Phosphoserine" evidence="1">
    <location>
        <position position="124"/>
    </location>
</feature>
<feature type="modified residue" description="Phosphothreonine" evidence="1">
    <location>
        <position position="134"/>
    </location>
</feature>
<feature type="modified residue" description="Phosphothreonine" evidence="1">
    <location>
        <position position="137"/>
    </location>
</feature>
<feature type="modified residue" description="Phosphoserine" evidence="1">
    <location>
        <position position="138"/>
    </location>
</feature>
<feature type="sequence variant" description="In alpha-1.">
    <original>D</original>
    <variation>G</variation>
    <location>
        <position position="15"/>
    </location>
</feature>
<feature type="sequence variant" description="In alpha-1.">
    <original>T</original>
    <variation>A</variation>
    <location>
        <position position="57"/>
    </location>
</feature>
<keyword id="KW-0007">Acetylation</keyword>
<keyword id="KW-0903">Direct protein sequencing</keyword>
<keyword id="KW-0349">Heme</keyword>
<keyword id="KW-0408">Iron</keyword>
<keyword id="KW-0479">Metal-binding</keyword>
<keyword id="KW-0561">Oxygen transport</keyword>
<keyword id="KW-0597">Phosphoprotein</keyword>
<keyword id="KW-1185">Reference proteome</keyword>
<keyword id="KW-0813">Transport</keyword>
<protein>
    <recommendedName>
        <fullName>Hemoglobin subunit alpha-1/2</fullName>
    </recommendedName>
    <alternativeName>
        <fullName>Alpha-1/2-globin</fullName>
    </alternativeName>
    <alternativeName>
        <fullName>Hemoglobin alpha-1/2 chain</fullName>
    </alternativeName>
    <alternativeName>
        <fullName>Hemoglobin alpha-I/II chain</fullName>
    </alternativeName>
</protein>
<sequence length="141" mass="15250">VLSPADKTNVKTTWDKIGGHAGEYGGEALERTFMAFPTTKTYFPHFDLSPGSAQVKTHGKKVADALTTAVSHIDDLPGALSALSDLHAYKLRVDPVNFKLLSHCLLVTLACHHPADFTPAVHASLDKFFSAVSTVLTSKYR</sequence>
<comment type="function">
    <text>Involved in oxygen transport from the lung to the various peripheral tissues.</text>
</comment>
<comment type="subunit">
    <text>Heterotetramer of two alpha chains and two beta chains.</text>
</comment>
<comment type="tissue specificity">
    <text>Red blood cells.</text>
</comment>
<comment type="polymorphism">
    <text evidence="4">There are two alleles. The sequence shown is that of alpha-II.</text>
</comment>
<comment type="similarity">
    <text evidence="3">Belongs to the globin family.</text>
</comment>
<proteinExistence type="evidence at protein level"/>